<name>RPOB_ACTPJ</name>
<accession>B0BSF5</accession>
<keyword id="KW-0240">DNA-directed RNA polymerase</keyword>
<keyword id="KW-0548">Nucleotidyltransferase</keyword>
<keyword id="KW-0804">Transcription</keyword>
<keyword id="KW-0808">Transferase</keyword>
<dbReference type="EC" id="2.7.7.6" evidence="1"/>
<dbReference type="EMBL" id="CP000687">
    <property type="protein sequence ID" value="ABY70312.1"/>
    <property type="molecule type" value="Genomic_DNA"/>
</dbReference>
<dbReference type="RefSeq" id="WP_012263369.1">
    <property type="nucleotide sequence ID" value="NC_010278.1"/>
</dbReference>
<dbReference type="SMR" id="B0BSF5"/>
<dbReference type="KEGG" id="apj:APJL_1762"/>
<dbReference type="HOGENOM" id="CLU_000524_4_0_6"/>
<dbReference type="Proteomes" id="UP000008547">
    <property type="component" value="Chromosome"/>
</dbReference>
<dbReference type="GO" id="GO:0000428">
    <property type="term" value="C:DNA-directed RNA polymerase complex"/>
    <property type="evidence" value="ECO:0007669"/>
    <property type="project" value="UniProtKB-KW"/>
</dbReference>
<dbReference type="GO" id="GO:0003677">
    <property type="term" value="F:DNA binding"/>
    <property type="evidence" value="ECO:0007669"/>
    <property type="project" value="UniProtKB-UniRule"/>
</dbReference>
<dbReference type="GO" id="GO:0003899">
    <property type="term" value="F:DNA-directed RNA polymerase activity"/>
    <property type="evidence" value="ECO:0007669"/>
    <property type="project" value="UniProtKB-UniRule"/>
</dbReference>
<dbReference type="GO" id="GO:0032549">
    <property type="term" value="F:ribonucleoside binding"/>
    <property type="evidence" value="ECO:0007669"/>
    <property type="project" value="InterPro"/>
</dbReference>
<dbReference type="GO" id="GO:0006351">
    <property type="term" value="P:DNA-templated transcription"/>
    <property type="evidence" value="ECO:0007669"/>
    <property type="project" value="UniProtKB-UniRule"/>
</dbReference>
<dbReference type="CDD" id="cd00653">
    <property type="entry name" value="RNA_pol_B_RPB2"/>
    <property type="match status" value="1"/>
</dbReference>
<dbReference type="FunFam" id="2.40.270.10:FF:000003">
    <property type="entry name" value="DNA-directed RNA polymerase subunit beta"/>
    <property type="match status" value="1"/>
</dbReference>
<dbReference type="FunFam" id="2.40.270.10:FF:000004">
    <property type="entry name" value="DNA-directed RNA polymerase subunit beta"/>
    <property type="match status" value="1"/>
</dbReference>
<dbReference type="FunFam" id="2.40.50.100:FF:000006">
    <property type="entry name" value="DNA-directed RNA polymerase subunit beta"/>
    <property type="match status" value="1"/>
</dbReference>
<dbReference type="FunFam" id="2.40.50.150:FF:000001">
    <property type="entry name" value="DNA-directed RNA polymerase subunit beta"/>
    <property type="match status" value="1"/>
</dbReference>
<dbReference type="FunFam" id="3.90.1100.10:FF:000002">
    <property type="entry name" value="DNA-directed RNA polymerase subunit beta"/>
    <property type="match status" value="1"/>
</dbReference>
<dbReference type="FunFam" id="3.90.1110.10:FF:000001">
    <property type="entry name" value="DNA-directed RNA polymerase subunit beta"/>
    <property type="match status" value="1"/>
</dbReference>
<dbReference type="FunFam" id="3.90.1110.10:FF:000004">
    <property type="entry name" value="DNA-directed RNA polymerase subunit beta"/>
    <property type="match status" value="1"/>
</dbReference>
<dbReference type="FunFam" id="3.90.1800.10:FF:000001">
    <property type="entry name" value="DNA-directed RNA polymerase subunit beta"/>
    <property type="match status" value="1"/>
</dbReference>
<dbReference type="Gene3D" id="2.40.50.100">
    <property type="match status" value="1"/>
</dbReference>
<dbReference type="Gene3D" id="2.40.50.150">
    <property type="match status" value="1"/>
</dbReference>
<dbReference type="Gene3D" id="3.90.1100.10">
    <property type="match status" value="2"/>
</dbReference>
<dbReference type="Gene3D" id="2.30.150.10">
    <property type="entry name" value="DNA-directed RNA polymerase, beta subunit, external 1 domain"/>
    <property type="match status" value="1"/>
</dbReference>
<dbReference type="Gene3D" id="2.40.270.10">
    <property type="entry name" value="DNA-directed RNA polymerase, subunit 2, domain 6"/>
    <property type="match status" value="1"/>
</dbReference>
<dbReference type="Gene3D" id="3.90.1800.10">
    <property type="entry name" value="RNA polymerase alpha subunit dimerisation domain"/>
    <property type="match status" value="1"/>
</dbReference>
<dbReference type="Gene3D" id="3.90.1110.10">
    <property type="entry name" value="RNA polymerase Rpb2, domain 2"/>
    <property type="match status" value="1"/>
</dbReference>
<dbReference type="HAMAP" id="MF_01321">
    <property type="entry name" value="RNApol_bact_RpoB"/>
    <property type="match status" value="1"/>
</dbReference>
<dbReference type="InterPro" id="IPR042107">
    <property type="entry name" value="DNA-dir_RNA_pol_bsu_ext_1_sf"/>
</dbReference>
<dbReference type="InterPro" id="IPR019462">
    <property type="entry name" value="DNA-dir_RNA_pol_bsu_external_1"/>
</dbReference>
<dbReference type="InterPro" id="IPR015712">
    <property type="entry name" value="DNA-dir_RNA_pol_su2"/>
</dbReference>
<dbReference type="InterPro" id="IPR007120">
    <property type="entry name" value="DNA-dir_RNAP_su2_dom"/>
</dbReference>
<dbReference type="InterPro" id="IPR037033">
    <property type="entry name" value="DNA-dir_RNAP_su2_hyb_sf"/>
</dbReference>
<dbReference type="InterPro" id="IPR010243">
    <property type="entry name" value="RNA_pol_bsu_bac"/>
</dbReference>
<dbReference type="InterPro" id="IPR007121">
    <property type="entry name" value="RNA_pol_bsu_CS"/>
</dbReference>
<dbReference type="InterPro" id="IPR007644">
    <property type="entry name" value="RNA_pol_bsu_protrusion"/>
</dbReference>
<dbReference type="InterPro" id="IPR007642">
    <property type="entry name" value="RNA_pol_Rpb2_2"/>
</dbReference>
<dbReference type="InterPro" id="IPR037034">
    <property type="entry name" value="RNA_pol_Rpb2_2_sf"/>
</dbReference>
<dbReference type="InterPro" id="IPR007645">
    <property type="entry name" value="RNA_pol_Rpb2_3"/>
</dbReference>
<dbReference type="InterPro" id="IPR007641">
    <property type="entry name" value="RNA_pol_Rpb2_7"/>
</dbReference>
<dbReference type="InterPro" id="IPR014724">
    <property type="entry name" value="RNA_pol_RPB2_OB-fold"/>
</dbReference>
<dbReference type="NCBIfam" id="NF001616">
    <property type="entry name" value="PRK00405.1"/>
    <property type="match status" value="1"/>
</dbReference>
<dbReference type="NCBIfam" id="TIGR02013">
    <property type="entry name" value="rpoB"/>
    <property type="match status" value="1"/>
</dbReference>
<dbReference type="PANTHER" id="PTHR20856">
    <property type="entry name" value="DNA-DIRECTED RNA POLYMERASE I SUBUNIT 2"/>
    <property type="match status" value="1"/>
</dbReference>
<dbReference type="Pfam" id="PF04563">
    <property type="entry name" value="RNA_pol_Rpb2_1"/>
    <property type="match status" value="1"/>
</dbReference>
<dbReference type="Pfam" id="PF04561">
    <property type="entry name" value="RNA_pol_Rpb2_2"/>
    <property type="match status" value="2"/>
</dbReference>
<dbReference type="Pfam" id="PF04565">
    <property type="entry name" value="RNA_pol_Rpb2_3"/>
    <property type="match status" value="1"/>
</dbReference>
<dbReference type="Pfam" id="PF10385">
    <property type="entry name" value="RNA_pol_Rpb2_45"/>
    <property type="match status" value="1"/>
</dbReference>
<dbReference type="Pfam" id="PF00562">
    <property type="entry name" value="RNA_pol_Rpb2_6"/>
    <property type="match status" value="1"/>
</dbReference>
<dbReference type="Pfam" id="PF04560">
    <property type="entry name" value="RNA_pol_Rpb2_7"/>
    <property type="match status" value="1"/>
</dbReference>
<dbReference type="SUPFAM" id="SSF64484">
    <property type="entry name" value="beta and beta-prime subunits of DNA dependent RNA-polymerase"/>
    <property type="match status" value="1"/>
</dbReference>
<dbReference type="PROSITE" id="PS01166">
    <property type="entry name" value="RNA_POL_BETA"/>
    <property type="match status" value="1"/>
</dbReference>
<comment type="function">
    <text evidence="1">DNA-dependent RNA polymerase catalyzes the transcription of DNA into RNA using the four ribonucleoside triphosphates as substrates.</text>
</comment>
<comment type="catalytic activity">
    <reaction evidence="1">
        <text>RNA(n) + a ribonucleoside 5'-triphosphate = RNA(n+1) + diphosphate</text>
        <dbReference type="Rhea" id="RHEA:21248"/>
        <dbReference type="Rhea" id="RHEA-COMP:14527"/>
        <dbReference type="Rhea" id="RHEA-COMP:17342"/>
        <dbReference type="ChEBI" id="CHEBI:33019"/>
        <dbReference type="ChEBI" id="CHEBI:61557"/>
        <dbReference type="ChEBI" id="CHEBI:140395"/>
        <dbReference type="EC" id="2.7.7.6"/>
    </reaction>
</comment>
<comment type="subunit">
    <text evidence="1">The RNAP catalytic core consists of 2 alpha, 1 beta, 1 beta' and 1 omega subunit. When a sigma factor is associated with the core the holoenzyme is formed, which can initiate transcription.</text>
</comment>
<comment type="similarity">
    <text evidence="1">Belongs to the RNA polymerase beta chain family.</text>
</comment>
<organism>
    <name type="scientific">Actinobacillus pleuropneumoniae serotype 3 (strain JL03)</name>
    <dbReference type="NCBI Taxonomy" id="434271"/>
    <lineage>
        <taxon>Bacteria</taxon>
        <taxon>Pseudomonadati</taxon>
        <taxon>Pseudomonadota</taxon>
        <taxon>Gammaproteobacteria</taxon>
        <taxon>Pasteurellales</taxon>
        <taxon>Pasteurellaceae</taxon>
        <taxon>Actinobacillus</taxon>
    </lineage>
</organism>
<protein>
    <recommendedName>
        <fullName evidence="1">DNA-directed RNA polymerase subunit beta</fullName>
        <shortName evidence="1">RNAP subunit beta</shortName>
        <ecNumber evidence="1">2.7.7.6</ecNumber>
    </recommendedName>
    <alternativeName>
        <fullName evidence="1">RNA polymerase subunit beta</fullName>
    </alternativeName>
    <alternativeName>
        <fullName evidence="1">Transcriptase subunit beta</fullName>
    </alternativeName>
</protein>
<sequence length="1342" mass="149881">MAYSYSEKKRIRKSFGKRPQVLNVPYLLTIQLDSYEKFIQRDSDGQQGLEAAFRSVFPIVSNNGSTELQYVSYELGEPVFDVRECQIRGTTYAAPLRVKLRLVTFDREAAAGTVKDIKEQNVYMGEIPLMTDNGTFVINGTERVIVSQLHRSPGVFFDSDKGKTHSSGKVLYNARIIPYRGSWLDFEFDPKDNLYARIDRRRKLPATIILRALGYTTEEILSMFFDKVNFEIQDNKLLMTLVPERLRGETAAFDIEANGKVYVERGRRITARHIRTLEKDEIKQIEVPVEYIVGKVAAKDYVDLSTGELVCPANMEISMEMLAKLSQAGYKEIEVLFTNDLDHGPYISETLRVDPTYDRLSALVEIYRMMRPGEPPTKEAAEALFDNMFFSADRYDLSAVGRMKFNRSLNLEEGVGSGILSNDDITGVMKKLIEIRNGRGEVDDIDHLGNRRIRSVGEMAENQFRIGLVRVERAVRERLSLGDLDGITPQDLINAKPISAAVKEFFGSSQLSQFMDQNNPLSEVTHKRRISALGPGGLTRERAGFEVRDVHTTHYGRLCPIETPEGPNIGLINSLSVYARTNNYGFLETPFRKVVNGQVTEDIEYLSAIEEGNYVIAQANSNLDENFRFTDTYVTCRGEHGESGLYKPEDIHYMDISTQQVVSVAAALIPFLEHDDANRALMGANMQRQAVPTLRADKPLVGTGMEKPIALDSGVAIVAKRGGIVQRVDASRIVVKVNEDETIPGEAGIDIYNLIKYTRSNQNTCINQIPCVNLGEPVARGEILADGPSTDLGELALGQNIRVAFMPWNGYNFEDSMLVSERVVQEDRFTTIHIQELSCVARDTKLGAEEITADIPNVGESALSKLDESGIVYVGAEVKGGDILVGKVTPKGETQLTPEEKLLRAIFGEKASDVKDSSLRVPNGTSGTVIDVQVFTRDGVEKDKRALEIEEMQLKEAKKDLTEELEILEAGLFTRVRNLLIEGGVSEAELDKVAREKWLEQTLDDEAKQNQLEQLAEQHEELRKEFERKLEIKRNKIIQGDDLAPGVLKVVKVYLAVRRQIQPGDKMAGRHGNKGVISKINPVEDMPYDENGQPVEIVLNPLGVPSRMNIGQILETHLGLAAKGIGDQINAMIKQQQSVAKLREYIQKAYDLGHGSQSVDLSTFTDEEVMRLAENLRKGLPLATPVFDGAHESEIKGLLELGDLPTSGQITLFDGRTGEKFERPVTVGYMYMLKLNHLVDDKMHARSTGSYSLVTQQPLGGKAQFGGQRFGEMEVWALEAYGAAYTLQEMLTVKSDDVNGRTKMYKNIVDGTHQMEPGMPESFNVLLKEIRALGIDMELDEE</sequence>
<feature type="chain" id="PRO_1000141654" description="DNA-directed RNA polymerase subunit beta">
    <location>
        <begin position="1"/>
        <end position="1342"/>
    </location>
</feature>
<proteinExistence type="inferred from homology"/>
<evidence type="ECO:0000255" key="1">
    <source>
        <dbReference type="HAMAP-Rule" id="MF_01321"/>
    </source>
</evidence>
<gene>
    <name evidence="1" type="primary">rpoB</name>
    <name type="ordered locus">APJL_1762</name>
</gene>
<reference key="1">
    <citation type="journal article" date="2008" name="PLoS ONE">
        <title>Genome biology of Actinobacillus pleuropneumoniae JL03, an isolate of serotype 3 prevalent in China.</title>
        <authorList>
            <person name="Xu Z."/>
            <person name="Zhou Y."/>
            <person name="Li L."/>
            <person name="Zhou R."/>
            <person name="Xiao S."/>
            <person name="Wan Y."/>
            <person name="Zhang S."/>
            <person name="Wang K."/>
            <person name="Li W."/>
            <person name="Li L."/>
            <person name="Jin H."/>
            <person name="Kang M."/>
            <person name="Dalai B."/>
            <person name="Li T."/>
            <person name="Liu L."/>
            <person name="Cheng Y."/>
            <person name="Zhang L."/>
            <person name="Xu T."/>
            <person name="Zheng H."/>
            <person name="Pu S."/>
            <person name="Wang B."/>
            <person name="Gu W."/>
            <person name="Zhang X.L."/>
            <person name="Zhu G.-F."/>
            <person name="Wang S."/>
            <person name="Zhao G.-P."/>
            <person name="Chen H."/>
        </authorList>
    </citation>
    <scope>NUCLEOTIDE SEQUENCE [LARGE SCALE GENOMIC DNA]</scope>
    <source>
        <strain>JL03</strain>
    </source>
</reference>